<name>RL27_CROS5</name>
<feature type="chain" id="PRO_1000146524" description="Large ribosomal subunit protein bL27">
    <location>
        <begin position="1"/>
        <end position="87"/>
    </location>
</feature>
<feature type="region of interest" description="Disordered" evidence="2">
    <location>
        <begin position="1"/>
        <end position="24"/>
    </location>
</feature>
<organism>
    <name type="scientific">Crocosphaera subtropica (strain ATCC 51142 / BH68)</name>
    <name type="common">Cyanothece sp. (strain ATCC 51142)</name>
    <dbReference type="NCBI Taxonomy" id="43989"/>
    <lineage>
        <taxon>Bacteria</taxon>
        <taxon>Bacillati</taxon>
        <taxon>Cyanobacteriota</taxon>
        <taxon>Cyanophyceae</taxon>
        <taxon>Oscillatoriophycideae</taxon>
        <taxon>Chroococcales</taxon>
        <taxon>Aphanothecaceae</taxon>
        <taxon>Crocosphaera</taxon>
        <taxon>Crocosphaera subtropica</taxon>
    </lineage>
</organism>
<protein>
    <recommendedName>
        <fullName evidence="1">Large ribosomal subunit protein bL27</fullName>
    </recommendedName>
    <alternativeName>
        <fullName evidence="3">50S ribosomal protein L27</fullName>
    </alternativeName>
</protein>
<evidence type="ECO:0000255" key="1">
    <source>
        <dbReference type="HAMAP-Rule" id="MF_00539"/>
    </source>
</evidence>
<evidence type="ECO:0000256" key="2">
    <source>
        <dbReference type="SAM" id="MobiDB-lite"/>
    </source>
</evidence>
<evidence type="ECO:0000305" key="3"/>
<comment type="similarity">
    <text evidence="1">Belongs to the bacterial ribosomal protein bL27 family.</text>
</comment>
<proteinExistence type="inferred from homology"/>
<accession>B1WWL8</accession>
<keyword id="KW-1185">Reference proteome</keyword>
<keyword id="KW-0687">Ribonucleoprotein</keyword>
<keyword id="KW-0689">Ribosomal protein</keyword>
<gene>
    <name evidence="1" type="primary">rpmA</name>
    <name evidence="1" type="synonym">rpl27</name>
    <name type="ordered locus">cce_1392</name>
</gene>
<reference key="1">
    <citation type="journal article" date="2008" name="Proc. Natl. Acad. Sci. U.S.A.">
        <title>The genome of Cyanothece 51142, a unicellular diazotrophic cyanobacterium important in the marine nitrogen cycle.</title>
        <authorList>
            <person name="Welsh E.A."/>
            <person name="Liberton M."/>
            <person name="Stoeckel J."/>
            <person name="Loh T."/>
            <person name="Elvitigala T."/>
            <person name="Wang C."/>
            <person name="Wollam A."/>
            <person name="Fulton R.S."/>
            <person name="Clifton S.W."/>
            <person name="Jacobs J.M."/>
            <person name="Aurora R."/>
            <person name="Ghosh B.K."/>
            <person name="Sherman L.A."/>
            <person name="Smith R.D."/>
            <person name="Wilson R.K."/>
            <person name="Pakrasi H.B."/>
        </authorList>
    </citation>
    <scope>NUCLEOTIDE SEQUENCE [LARGE SCALE GENOMIC DNA]</scope>
    <source>
        <strain>ATCC 51142 / BH68</strain>
    </source>
</reference>
<sequence>MAHKKGTGSTRNGRDSRSQRLGVKRYGGQVVKAGNILIRQRGTKVHPGNNVGRGNDDTLFALIDGIVTFEYKTKSRRKVSVYPVAAE</sequence>
<dbReference type="EMBL" id="CP000806">
    <property type="protein sequence ID" value="ACB50742.1"/>
    <property type="molecule type" value="Genomic_DNA"/>
</dbReference>
<dbReference type="RefSeq" id="WP_009544206.1">
    <property type="nucleotide sequence ID" value="NC_010546.1"/>
</dbReference>
<dbReference type="SMR" id="B1WWL8"/>
<dbReference type="STRING" id="43989.cce_1392"/>
<dbReference type="KEGG" id="cyt:cce_1392"/>
<dbReference type="eggNOG" id="COG0211">
    <property type="taxonomic scope" value="Bacteria"/>
</dbReference>
<dbReference type="HOGENOM" id="CLU_095424_4_0_3"/>
<dbReference type="OrthoDB" id="9803474at2"/>
<dbReference type="Proteomes" id="UP000001203">
    <property type="component" value="Chromosome circular"/>
</dbReference>
<dbReference type="GO" id="GO:0022625">
    <property type="term" value="C:cytosolic large ribosomal subunit"/>
    <property type="evidence" value="ECO:0007669"/>
    <property type="project" value="TreeGrafter"/>
</dbReference>
<dbReference type="GO" id="GO:0003735">
    <property type="term" value="F:structural constituent of ribosome"/>
    <property type="evidence" value="ECO:0007669"/>
    <property type="project" value="InterPro"/>
</dbReference>
<dbReference type="GO" id="GO:0006412">
    <property type="term" value="P:translation"/>
    <property type="evidence" value="ECO:0007669"/>
    <property type="project" value="UniProtKB-UniRule"/>
</dbReference>
<dbReference type="FunFam" id="2.40.50.100:FF:000004">
    <property type="entry name" value="50S ribosomal protein L27"/>
    <property type="match status" value="1"/>
</dbReference>
<dbReference type="Gene3D" id="2.40.50.100">
    <property type="match status" value="1"/>
</dbReference>
<dbReference type="HAMAP" id="MF_00539">
    <property type="entry name" value="Ribosomal_bL27"/>
    <property type="match status" value="1"/>
</dbReference>
<dbReference type="InterPro" id="IPR001684">
    <property type="entry name" value="Ribosomal_bL27"/>
</dbReference>
<dbReference type="InterPro" id="IPR018261">
    <property type="entry name" value="Ribosomal_bL27_CS"/>
</dbReference>
<dbReference type="NCBIfam" id="TIGR00062">
    <property type="entry name" value="L27"/>
    <property type="match status" value="1"/>
</dbReference>
<dbReference type="PANTHER" id="PTHR15893:SF0">
    <property type="entry name" value="LARGE RIBOSOMAL SUBUNIT PROTEIN BL27M"/>
    <property type="match status" value="1"/>
</dbReference>
<dbReference type="PANTHER" id="PTHR15893">
    <property type="entry name" value="RIBOSOMAL PROTEIN L27"/>
    <property type="match status" value="1"/>
</dbReference>
<dbReference type="Pfam" id="PF01016">
    <property type="entry name" value="Ribosomal_L27"/>
    <property type="match status" value="1"/>
</dbReference>
<dbReference type="PRINTS" id="PR00063">
    <property type="entry name" value="RIBOSOMALL27"/>
</dbReference>
<dbReference type="SUPFAM" id="SSF110324">
    <property type="entry name" value="Ribosomal L27 protein-like"/>
    <property type="match status" value="1"/>
</dbReference>
<dbReference type="PROSITE" id="PS00831">
    <property type="entry name" value="RIBOSOMAL_L27"/>
    <property type="match status" value="1"/>
</dbReference>